<protein>
    <recommendedName>
        <fullName evidence="1">Lipoprotein signal peptidase</fullName>
        <ecNumber evidence="1">3.4.23.36</ecNumber>
    </recommendedName>
    <alternativeName>
        <fullName evidence="1">Prolipoprotein signal peptidase</fullName>
    </alternativeName>
    <alternativeName>
        <fullName evidence="1">Signal peptidase II</fullName>
        <shortName evidence="1">SPase II</shortName>
    </alternativeName>
</protein>
<name>LSPA_STRA1</name>
<gene>
    <name evidence="1" type="primary">lspA</name>
    <name type="ordered locus">SAK_1399</name>
</gene>
<feature type="chain" id="PRO_0000289435" description="Lipoprotein signal peptidase">
    <location>
        <begin position="1"/>
        <end position="154"/>
    </location>
</feature>
<feature type="transmembrane region" description="Helical" evidence="1">
    <location>
        <begin position="4"/>
        <end position="24"/>
    </location>
</feature>
<feature type="transmembrane region" description="Helical" evidence="1">
    <location>
        <begin position="62"/>
        <end position="82"/>
    </location>
</feature>
<feature type="transmembrane region" description="Helical" evidence="1">
    <location>
        <begin position="84"/>
        <end position="104"/>
    </location>
</feature>
<feature type="transmembrane region" description="Helical" evidence="1">
    <location>
        <begin position="125"/>
        <end position="145"/>
    </location>
</feature>
<feature type="active site" evidence="1">
    <location>
        <position position="114"/>
    </location>
</feature>
<feature type="active site" evidence="1">
    <location>
        <position position="130"/>
    </location>
</feature>
<reference key="1">
    <citation type="journal article" date="2005" name="Proc. Natl. Acad. Sci. U.S.A.">
        <title>Genome analysis of multiple pathogenic isolates of Streptococcus agalactiae: implications for the microbial 'pan-genome'.</title>
        <authorList>
            <person name="Tettelin H."/>
            <person name="Masignani V."/>
            <person name="Cieslewicz M.J."/>
            <person name="Donati C."/>
            <person name="Medini D."/>
            <person name="Ward N.L."/>
            <person name="Angiuoli S.V."/>
            <person name="Crabtree J."/>
            <person name="Jones A.L."/>
            <person name="Durkin A.S."/>
            <person name="DeBoy R.T."/>
            <person name="Davidsen T.M."/>
            <person name="Mora M."/>
            <person name="Scarselli M."/>
            <person name="Margarit y Ros I."/>
            <person name="Peterson J.D."/>
            <person name="Hauser C.R."/>
            <person name="Sundaram J.P."/>
            <person name="Nelson W.C."/>
            <person name="Madupu R."/>
            <person name="Brinkac L.M."/>
            <person name="Dodson R.J."/>
            <person name="Rosovitz M.J."/>
            <person name="Sullivan S.A."/>
            <person name="Daugherty S.C."/>
            <person name="Haft D.H."/>
            <person name="Selengut J."/>
            <person name="Gwinn M.L."/>
            <person name="Zhou L."/>
            <person name="Zafar N."/>
            <person name="Khouri H."/>
            <person name="Radune D."/>
            <person name="Dimitrov G."/>
            <person name="Watkins K."/>
            <person name="O'Connor K.J."/>
            <person name="Smith S."/>
            <person name="Utterback T.R."/>
            <person name="White O."/>
            <person name="Rubens C.E."/>
            <person name="Grandi G."/>
            <person name="Madoff L.C."/>
            <person name="Kasper D.L."/>
            <person name="Telford J.L."/>
            <person name="Wessels M.R."/>
            <person name="Rappuoli R."/>
            <person name="Fraser C.M."/>
        </authorList>
    </citation>
    <scope>NUCLEOTIDE SEQUENCE [LARGE SCALE GENOMIC DNA]</scope>
    <source>
        <strain>ATCC 27591 / A909 / CDC SS700</strain>
    </source>
</reference>
<sequence length="154" mass="17695">MRKIIIPIITILLIALDQLSKLWIVKHIELNQIKEFIPNIVSLTYLRNYGAAFSILQNQQWLFTLITIFVVCVAIIYLMKHINGSYWLLISLTLIISGGLGNFIDRLRLGYVVDMVHLDFINFAIFNVADSYLTIGIICLMIALWKEESNGNHN</sequence>
<comment type="function">
    <text evidence="1">This protein specifically catalyzes the removal of signal peptides from prolipoproteins.</text>
</comment>
<comment type="catalytic activity">
    <reaction evidence="1">
        <text>Release of signal peptides from bacterial membrane prolipoproteins. Hydrolyzes -Xaa-Yaa-Zaa-|-(S,diacylglyceryl)Cys-, in which Xaa is hydrophobic (preferably Leu), and Yaa (Ala or Ser) and Zaa (Gly or Ala) have small, neutral side chains.</text>
        <dbReference type="EC" id="3.4.23.36"/>
    </reaction>
</comment>
<comment type="pathway">
    <text evidence="1">Protein modification; lipoprotein biosynthesis (signal peptide cleavage).</text>
</comment>
<comment type="subcellular location">
    <subcellularLocation>
        <location evidence="1">Cell membrane</location>
        <topology evidence="1">Multi-pass membrane protein</topology>
    </subcellularLocation>
</comment>
<comment type="similarity">
    <text evidence="1">Belongs to the peptidase A8 family.</text>
</comment>
<accession>Q3K0E6</accession>
<keyword id="KW-0064">Aspartyl protease</keyword>
<keyword id="KW-1003">Cell membrane</keyword>
<keyword id="KW-0378">Hydrolase</keyword>
<keyword id="KW-0472">Membrane</keyword>
<keyword id="KW-0645">Protease</keyword>
<keyword id="KW-0812">Transmembrane</keyword>
<keyword id="KW-1133">Transmembrane helix</keyword>
<evidence type="ECO:0000255" key="1">
    <source>
        <dbReference type="HAMAP-Rule" id="MF_00161"/>
    </source>
</evidence>
<organism>
    <name type="scientific">Streptococcus agalactiae serotype Ia (strain ATCC 27591 / A909 / CDC SS700)</name>
    <dbReference type="NCBI Taxonomy" id="205921"/>
    <lineage>
        <taxon>Bacteria</taxon>
        <taxon>Bacillati</taxon>
        <taxon>Bacillota</taxon>
        <taxon>Bacilli</taxon>
        <taxon>Lactobacillales</taxon>
        <taxon>Streptococcaceae</taxon>
        <taxon>Streptococcus</taxon>
    </lineage>
</organism>
<proteinExistence type="inferred from homology"/>
<dbReference type="EC" id="3.4.23.36" evidence="1"/>
<dbReference type="EMBL" id="CP000114">
    <property type="protein sequence ID" value="ABA45537.1"/>
    <property type="molecule type" value="Genomic_DNA"/>
</dbReference>
<dbReference type="RefSeq" id="WP_001226250.1">
    <property type="nucleotide sequence ID" value="NC_007432.1"/>
</dbReference>
<dbReference type="SMR" id="Q3K0E6"/>
<dbReference type="GeneID" id="66886232"/>
<dbReference type="KEGG" id="sak:SAK_1399"/>
<dbReference type="HOGENOM" id="CLU_083252_3_3_9"/>
<dbReference type="UniPathway" id="UPA00665"/>
<dbReference type="GO" id="GO:0005886">
    <property type="term" value="C:plasma membrane"/>
    <property type="evidence" value="ECO:0007669"/>
    <property type="project" value="UniProtKB-SubCell"/>
</dbReference>
<dbReference type="GO" id="GO:0004190">
    <property type="term" value="F:aspartic-type endopeptidase activity"/>
    <property type="evidence" value="ECO:0007669"/>
    <property type="project" value="UniProtKB-UniRule"/>
</dbReference>
<dbReference type="GO" id="GO:0006508">
    <property type="term" value="P:proteolysis"/>
    <property type="evidence" value="ECO:0007669"/>
    <property type="project" value="UniProtKB-KW"/>
</dbReference>
<dbReference type="HAMAP" id="MF_00161">
    <property type="entry name" value="LspA"/>
    <property type="match status" value="1"/>
</dbReference>
<dbReference type="InterPro" id="IPR001872">
    <property type="entry name" value="Peptidase_A8"/>
</dbReference>
<dbReference type="NCBIfam" id="TIGR00077">
    <property type="entry name" value="lspA"/>
    <property type="match status" value="1"/>
</dbReference>
<dbReference type="PANTHER" id="PTHR33695">
    <property type="entry name" value="LIPOPROTEIN SIGNAL PEPTIDASE"/>
    <property type="match status" value="1"/>
</dbReference>
<dbReference type="PANTHER" id="PTHR33695:SF1">
    <property type="entry name" value="LIPOPROTEIN SIGNAL PEPTIDASE"/>
    <property type="match status" value="1"/>
</dbReference>
<dbReference type="Pfam" id="PF01252">
    <property type="entry name" value="Peptidase_A8"/>
    <property type="match status" value="1"/>
</dbReference>
<dbReference type="PRINTS" id="PR00781">
    <property type="entry name" value="LIPOSIGPTASE"/>
</dbReference>
<dbReference type="PROSITE" id="PS00855">
    <property type="entry name" value="SPASE_II"/>
    <property type="match status" value="1"/>
</dbReference>